<feature type="chain" id="PRO_0000149477" description="Adenine phosphoribosyltransferase">
    <location>
        <begin position="1"/>
        <end position="172"/>
    </location>
</feature>
<sequence length="172" mass="18997">MDLKALIRDIPDFPKPGIMFRDITTLLNSPEGLRYTIDSLVEQCESQELVPDHVVGMESRGFLFGMPLAYQMNAGFIPVRKPGKLPAPVHRVEYDLEYGKDSLEIHQDAVAPHHRVLIVDDLIATGGTAKATAELLTKLGCEVLGFAFIIELAALNGRQCLPDLPIISLVEY</sequence>
<name>APT_SYNY3</name>
<proteinExistence type="inferred from homology"/>
<organism>
    <name type="scientific">Synechocystis sp. (strain ATCC 27184 / PCC 6803 / Kazusa)</name>
    <dbReference type="NCBI Taxonomy" id="1111708"/>
    <lineage>
        <taxon>Bacteria</taxon>
        <taxon>Bacillati</taxon>
        <taxon>Cyanobacteriota</taxon>
        <taxon>Cyanophyceae</taxon>
        <taxon>Synechococcales</taxon>
        <taxon>Merismopediaceae</taxon>
        <taxon>Synechocystis</taxon>
    </lineage>
</organism>
<keyword id="KW-0963">Cytoplasm</keyword>
<keyword id="KW-0328">Glycosyltransferase</keyword>
<keyword id="KW-0660">Purine salvage</keyword>
<keyword id="KW-1185">Reference proteome</keyword>
<keyword id="KW-0808">Transferase</keyword>
<protein>
    <recommendedName>
        <fullName evidence="1">Adenine phosphoribosyltransferase</fullName>
        <shortName evidence="1">APRT</shortName>
        <ecNumber evidence="1">2.4.2.7</ecNumber>
    </recommendedName>
</protein>
<gene>
    <name evidence="1" type="primary">apt</name>
    <name type="ordered locus">sll1430</name>
</gene>
<evidence type="ECO:0000255" key="1">
    <source>
        <dbReference type="HAMAP-Rule" id="MF_00004"/>
    </source>
</evidence>
<reference key="1">
    <citation type="journal article" date="1996" name="DNA Res.">
        <title>Sequence analysis of the genome of the unicellular cyanobacterium Synechocystis sp. strain PCC6803. II. Sequence determination of the entire genome and assignment of potential protein-coding regions.</title>
        <authorList>
            <person name="Kaneko T."/>
            <person name="Sato S."/>
            <person name="Kotani H."/>
            <person name="Tanaka A."/>
            <person name="Asamizu E."/>
            <person name="Nakamura Y."/>
            <person name="Miyajima N."/>
            <person name="Hirosawa M."/>
            <person name="Sugiura M."/>
            <person name="Sasamoto S."/>
            <person name="Kimura T."/>
            <person name="Hosouchi T."/>
            <person name="Matsuno A."/>
            <person name="Muraki A."/>
            <person name="Nakazaki N."/>
            <person name="Naruo K."/>
            <person name="Okumura S."/>
            <person name="Shimpo S."/>
            <person name="Takeuchi C."/>
            <person name="Wada T."/>
            <person name="Watanabe A."/>
            <person name="Yamada M."/>
            <person name="Yasuda M."/>
            <person name="Tabata S."/>
        </authorList>
    </citation>
    <scope>NUCLEOTIDE SEQUENCE [LARGE SCALE GENOMIC DNA]</scope>
    <source>
        <strain>ATCC 27184 / PCC 6803 / Kazusa</strain>
    </source>
</reference>
<comment type="function">
    <text evidence="1">Catalyzes a salvage reaction resulting in the formation of AMP, that is energically less costly than de novo synthesis.</text>
</comment>
<comment type="catalytic activity">
    <reaction evidence="1">
        <text>AMP + diphosphate = 5-phospho-alpha-D-ribose 1-diphosphate + adenine</text>
        <dbReference type="Rhea" id="RHEA:16609"/>
        <dbReference type="ChEBI" id="CHEBI:16708"/>
        <dbReference type="ChEBI" id="CHEBI:33019"/>
        <dbReference type="ChEBI" id="CHEBI:58017"/>
        <dbReference type="ChEBI" id="CHEBI:456215"/>
        <dbReference type="EC" id="2.4.2.7"/>
    </reaction>
</comment>
<comment type="pathway">
    <text evidence="1">Purine metabolism; AMP biosynthesis via salvage pathway; AMP from adenine: step 1/1.</text>
</comment>
<comment type="subunit">
    <text evidence="1">Homodimer.</text>
</comment>
<comment type="subcellular location">
    <subcellularLocation>
        <location evidence="1">Cytoplasm</location>
    </subcellularLocation>
</comment>
<comment type="similarity">
    <text evidence="1">Belongs to the purine/pyrimidine phosphoribosyltransferase family.</text>
</comment>
<dbReference type="EC" id="2.4.2.7" evidence="1"/>
<dbReference type="EMBL" id="BA000022">
    <property type="protein sequence ID" value="BAA18001.1"/>
    <property type="molecule type" value="Genomic_DNA"/>
</dbReference>
<dbReference type="PIR" id="S75440">
    <property type="entry name" value="S75440"/>
</dbReference>
<dbReference type="SMR" id="P73935"/>
<dbReference type="FunCoup" id="P73935">
    <property type="interactions" value="322"/>
</dbReference>
<dbReference type="STRING" id="1148.gene:10498871"/>
<dbReference type="PaxDb" id="1148-1653085"/>
<dbReference type="EnsemblBacteria" id="BAA18001">
    <property type="protein sequence ID" value="BAA18001"/>
    <property type="gene ID" value="BAA18001"/>
</dbReference>
<dbReference type="KEGG" id="syn:sll1430"/>
<dbReference type="eggNOG" id="COG0503">
    <property type="taxonomic scope" value="Bacteria"/>
</dbReference>
<dbReference type="InParanoid" id="P73935"/>
<dbReference type="PhylomeDB" id="P73935"/>
<dbReference type="UniPathway" id="UPA00588">
    <property type="reaction ID" value="UER00646"/>
</dbReference>
<dbReference type="Proteomes" id="UP000001425">
    <property type="component" value="Chromosome"/>
</dbReference>
<dbReference type="GO" id="GO:0005737">
    <property type="term" value="C:cytoplasm"/>
    <property type="evidence" value="ECO:0000318"/>
    <property type="project" value="GO_Central"/>
</dbReference>
<dbReference type="GO" id="GO:0002055">
    <property type="term" value="F:adenine binding"/>
    <property type="evidence" value="ECO:0000318"/>
    <property type="project" value="GO_Central"/>
</dbReference>
<dbReference type="GO" id="GO:0003999">
    <property type="term" value="F:adenine phosphoribosyltransferase activity"/>
    <property type="evidence" value="ECO:0000318"/>
    <property type="project" value="GO_Central"/>
</dbReference>
<dbReference type="GO" id="GO:0016208">
    <property type="term" value="F:AMP binding"/>
    <property type="evidence" value="ECO:0000318"/>
    <property type="project" value="GO_Central"/>
</dbReference>
<dbReference type="GO" id="GO:0006168">
    <property type="term" value="P:adenine salvage"/>
    <property type="evidence" value="ECO:0000318"/>
    <property type="project" value="GO_Central"/>
</dbReference>
<dbReference type="GO" id="GO:0044209">
    <property type="term" value="P:AMP salvage"/>
    <property type="evidence" value="ECO:0000318"/>
    <property type="project" value="GO_Central"/>
</dbReference>
<dbReference type="GO" id="GO:0006166">
    <property type="term" value="P:purine ribonucleoside salvage"/>
    <property type="evidence" value="ECO:0007669"/>
    <property type="project" value="UniProtKB-KW"/>
</dbReference>
<dbReference type="CDD" id="cd06223">
    <property type="entry name" value="PRTases_typeI"/>
    <property type="match status" value="1"/>
</dbReference>
<dbReference type="FunFam" id="3.40.50.2020:FF:000004">
    <property type="entry name" value="Adenine phosphoribosyltransferase"/>
    <property type="match status" value="1"/>
</dbReference>
<dbReference type="Gene3D" id="3.40.50.2020">
    <property type="match status" value="1"/>
</dbReference>
<dbReference type="HAMAP" id="MF_00004">
    <property type="entry name" value="Aden_phosphoribosyltr"/>
    <property type="match status" value="1"/>
</dbReference>
<dbReference type="InterPro" id="IPR005764">
    <property type="entry name" value="Ade_phspho_trans"/>
</dbReference>
<dbReference type="InterPro" id="IPR000836">
    <property type="entry name" value="PRibTrfase_dom"/>
</dbReference>
<dbReference type="InterPro" id="IPR029057">
    <property type="entry name" value="PRTase-like"/>
</dbReference>
<dbReference type="InterPro" id="IPR050054">
    <property type="entry name" value="UPRTase/APRTase"/>
</dbReference>
<dbReference type="NCBIfam" id="TIGR01090">
    <property type="entry name" value="apt"/>
    <property type="match status" value="1"/>
</dbReference>
<dbReference type="NCBIfam" id="NF002634">
    <property type="entry name" value="PRK02304.1-3"/>
    <property type="match status" value="1"/>
</dbReference>
<dbReference type="NCBIfam" id="NF002636">
    <property type="entry name" value="PRK02304.1-5"/>
    <property type="match status" value="1"/>
</dbReference>
<dbReference type="PANTHER" id="PTHR32315">
    <property type="entry name" value="ADENINE PHOSPHORIBOSYLTRANSFERASE"/>
    <property type="match status" value="1"/>
</dbReference>
<dbReference type="PANTHER" id="PTHR32315:SF3">
    <property type="entry name" value="ADENINE PHOSPHORIBOSYLTRANSFERASE"/>
    <property type="match status" value="1"/>
</dbReference>
<dbReference type="Pfam" id="PF00156">
    <property type="entry name" value="Pribosyltran"/>
    <property type="match status" value="1"/>
</dbReference>
<dbReference type="SUPFAM" id="SSF53271">
    <property type="entry name" value="PRTase-like"/>
    <property type="match status" value="1"/>
</dbReference>
<dbReference type="PROSITE" id="PS00103">
    <property type="entry name" value="PUR_PYR_PR_TRANSFER"/>
    <property type="match status" value="1"/>
</dbReference>
<accession>P73935</accession>